<name>WTF14_SCHPO</name>
<accession>O74512</accession>
<comment type="function">
    <text evidence="1">May act in meiotic drive.</text>
</comment>
<comment type="subcellular location">
    <subcellularLocation>
        <location evidence="3 5">Endoplasmic reticulum membrane</location>
        <topology evidence="3 5">Multi-pass membrane protein</topology>
    </subcellularLocation>
    <text evidence="2">Localizes to the endoplasmic reticulum in both vegetative cells and in spores.</text>
</comment>
<comment type="developmental stage">
    <text evidence="6">Expression is constant during meiosis (at protein level).</text>
</comment>
<comment type="disruption phenotype">
    <text evidence="6">Simultaneous knockout of wtf15 results in normal vegetative cell population growth (PubMed:32032353). Simultaneous knockout of wtf15, wtf11 and wtf7 results in normal spore viability (PubMed:32032353).</text>
</comment>
<comment type="miscellaneous">
    <text evidence="8">Although the gene is capable of encoding two isoforms, RNA sequencing data show no evidence of alternative transcripts.</text>
</comment>
<comment type="similarity">
    <text evidence="7">Belongs to the WTF family.</text>
</comment>
<dbReference type="EMBL" id="CU329672">
    <property type="protein sequence ID" value="CAA20362.2"/>
    <property type="molecule type" value="Genomic_DNA"/>
</dbReference>
<dbReference type="PIR" id="T41533">
    <property type="entry name" value="T41533"/>
</dbReference>
<dbReference type="RefSeq" id="NP_588264.2">
    <property type="nucleotide sequence ID" value="NM_001023254.2"/>
</dbReference>
<dbReference type="BioGRID" id="275965">
    <property type="interactions" value="3"/>
</dbReference>
<dbReference type="STRING" id="284812.O74512"/>
<dbReference type="iPTMnet" id="O74512"/>
<dbReference type="PaxDb" id="4896-SPCC663.02.1"/>
<dbReference type="EnsemblFungi" id="SPCC663.02.1">
    <property type="protein sequence ID" value="SPCC663.02.1:pep"/>
    <property type="gene ID" value="SPCC663.02"/>
</dbReference>
<dbReference type="GeneID" id="2539400"/>
<dbReference type="KEGG" id="spo:2539400"/>
<dbReference type="PomBase" id="SPCC663.02">
    <property type="gene designation" value="wtf14"/>
</dbReference>
<dbReference type="VEuPathDB" id="FungiDB:SPCC663.02"/>
<dbReference type="HOGENOM" id="CLU_1210404_0_0_1"/>
<dbReference type="InParanoid" id="O74512"/>
<dbReference type="PRO" id="PR:O74512"/>
<dbReference type="Proteomes" id="UP000002485">
    <property type="component" value="Chromosome III"/>
</dbReference>
<dbReference type="GO" id="GO:0005783">
    <property type="term" value="C:endoplasmic reticulum"/>
    <property type="evidence" value="ECO:0000314"/>
    <property type="project" value="PomBase"/>
</dbReference>
<dbReference type="GO" id="GO:0005789">
    <property type="term" value="C:endoplasmic reticulum membrane"/>
    <property type="evidence" value="ECO:0007669"/>
    <property type="project" value="UniProtKB-SubCell"/>
</dbReference>
<dbReference type="GO" id="GO:0110134">
    <property type="term" value="P:meiotic drive"/>
    <property type="evidence" value="ECO:0000255"/>
    <property type="project" value="PomBase"/>
</dbReference>
<protein>
    <recommendedName>
        <fullName evidence="9">Wtf element wtf14</fullName>
    </recommendedName>
</protein>
<feature type="chain" id="PRO_0000193228" description="Wtf element wtf14">
    <location>
        <begin position="1"/>
        <end position="229"/>
    </location>
</feature>
<feature type="transmembrane region" description="Helical" evidence="3">
    <location>
        <begin position="71"/>
        <end position="91"/>
    </location>
</feature>
<feature type="transmembrane region" description="Helical" evidence="3">
    <location>
        <begin position="100"/>
        <end position="120"/>
    </location>
</feature>
<feature type="transmembrane region" description="Helical" evidence="3">
    <location>
        <begin position="151"/>
        <end position="171"/>
    </location>
</feature>
<feature type="transmembrane region" description="Helical" evidence="3">
    <location>
        <begin position="188"/>
        <end position="208"/>
    </location>
</feature>
<feature type="region of interest" description="Disordered" evidence="4">
    <location>
        <begin position="1"/>
        <end position="27"/>
    </location>
</feature>
<feature type="compositionally biased region" description="Basic and acidic residues" evidence="4">
    <location>
        <begin position="1"/>
        <end position="26"/>
    </location>
</feature>
<proteinExistence type="evidence at protein level"/>
<keyword id="KW-0256">Endoplasmic reticulum</keyword>
<keyword id="KW-0472">Membrane</keyword>
<keyword id="KW-1185">Reference proteome</keyword>
<keyword id="KW-0812">Transmembrane</keyword>
<keyword id="KW-1133">Transmembrane helix</keyword>
<sequence>MENNHHLAKDSLDELNPKRGKGEHETQVSQYTVVEEATIPQSLVKTSRPADHKVMEASKVADTRTAWSTKIPAVLLPVFVINIALFKYLVFANFSTKDRVLFGLGNGGINIFSMWLLLATYETWFRSIKEVIVACGAGIRSFPQKRGVNMLYAILKLTFVNAFAIPLLMFFRSHFEQWRLGCPLVERVIGVMLNVAYFIIEIENPGLFTRVFNKYCDCLFAIRDILNRN</sequence>
<organism>
    <name type="scientific">Schizosaccharomyces pombe (strain 972 / ATCC 24843)</name>
    <name type="common">Fission yeast</name>
    <dbReference type="NCBI Taxonomy" id="284812"/>
    <lineage>
        <taxon>Eukaryota</taxon>
        <taxon>Fungi</taxon>
        <taxon>Dikarya</taxon>
        <taxon>Ascomycota</taxon>
        <taxon>Taphrinomycotina</taxon>
        <taxon>Schizosaccharomycetes</taxon>
        <taxon>Schizosaccharomycetales</taxon>
        <taxon>Schizosaccharomycetaceae</taxon>
        <taxon>Schizosaccharomyces</taxon>
    </lineage>
</organism>
<evidence type="ECO:0000250" key="1">
    <source>
        <dbReference type="UniProtKB" id="A0A218N034"/>
    </source>
</evidence>
<evidence type="ECO:0000250" key="2">
    <source>
        <dbReference type="UniProtKB" id="A0A482ASA5"/>
    </source>
</evidence>
<evidence type="ECO:0000255" key="3"/>
<evidence type="ECO:0000256" key="4">
    <source>
        <dbReference type="SAM" id="MobiDB-lite"/>
    </source>
</evidence>
<evidence type="ECO:0000269" key="5">
    <source>
    </source>
</evidence>
<evidence type="ECO:0000269" key="6">
    <source>
    </source>
</evidence>
<evidence type="ECO:0000305" key="7"/>
<evidence type="ECO:0000305" key="8">
    <source>
    </source>
</evidence>
<evidence type="ECO:0000312" key="9">
    <source>
        <dbReference type="PomBase" id="SPCC663.02"/>
    </source>
</evidence>
<reference key="1">
    <citation type="journal article" date="2002" name="Nature">
        <title>The genome sequence of Schizosaccharomyces pombe.</title>
        <authorList>
            <person name="Wood V."/>
            <person name="Gwilliam R."/>
            <person name="Rajandream M.A."/>
            <person name="Lyne M.H."/>
            <person name="Lyne R."/>
            <person name="Stewart A."/>
            <person name="Sgouros J.G."/>
            <person name="Peat N."/>
            <person name="Hayles J."/>
            <person name="Baker S.G."/>
            <person name="Basham D."/>
            <person name="Bowman S."/>
            <person name="Brooks K."/>
            <person name="Brown D."/>
            <person name="Brown S."/>
            <person name="Chillingworth T."/>
            <person name="Churcher C.M."/>
            <person name="Collins M."/>
            <person name="Connor R."/>
            <person name="Cronin A."/>
            <person name="Davis P."/>
            <person name="Feltwell T."/>
            <person name="Fraser A."/>
            <person name="Gentles S."/>
            <person name="Goble A."/>
            <person name="Hamlin N."/>
            <person name="Harris D.E."/>
            <person name="Hidalgo J."/>
            <person name="Hodgson G."/>
            <person name="Holroyd S."/>
            <person name="Hornsby T."/>
            <person name="Howarth S."/>
            <person name="Huckle E.J."/>
            <person name="Hunt S."/>
            <person name="Jagels K."/>
            <person name="James K.D."/>
            <person name="Jones L."/>
            <person name="Jones M."/>
            <person name="Leather S."/>
            <person name="McDonald S."/>
            <person name="McLean J."/>
            <person name="Mooney P."/>
            <person name="Moule S."/>
            <person name="Mungall K.L."/>
            <person name="Murphy L.D."/>
            <person name="Niblett D."/>
            <person name="Odell C."/>
            <person name="Oliver K."/>
            <person name="O'Neil S."/>
            <person name="Pearson D."/>
            <person name="Quail M.A."/>
            <person name="Rabbinowitsch E."/>
            <person name="Rutherford K.M."/>
            <person name="Rutter S."/>
            <person name="Saunders D."/>
            <person name="Seeger K."/>
            <person name="Sharp S."/>
            <person name="Skelton J."/>
            <person name="Simmonds M.N."/>
            <person name="Squares R."/>
            <person name="Squares S."/>
            <person name="Stevens K."/>
            <person name="Taylor K."/>
            <person name="Taylor R.G."/>
            <person name="Tivey A."/>
            <person name="Walsh S.V."/>
            <person name="Warren T."/>
            <person name="Whitehead S."/>
            <person name="Woodward J.R."/>
            <person name="Volckaert G."/>
            <person name="Aert R."/>
            <person name="Robben J."/>
            <person name="Grymonprez B."/>
            <person name="Weltjens I."/>
            <person name="Vanstreels E."/>
            <person name="Rieger M."/>
            <person name="Schaefer M."/>
            <person name="Mueller-Auer S."/>
            <person name="Gabel C."/>
            <person name="Fuchs M."/>
            <person name="Duesterhoeft A."/>
            <person name="Fritzc C."/>
            <person name="Holzer E."/>
            <person name="Moestl D."/>
            <person name="Hilbert H."/>
            <person name="Borzym K."/>
            <person name="Langer I."/>
            <person name="Beck A."/>
            <person name="Lehrach H."/>
            <person name="Reinhardt R."/>
            <person name="Pohl T.M."/>
            <person name="Eger P."/>
            <person name="Zimmermann W."/>
            <person name="Wedler H."/>
            <person name="Wambutt R."/>
            <person name="Purnelle B."/>
            <person name="Goffeau A."/>
            <person name="Cadieu E."/>
            <person name="Dreano S."/>
            <person name="Gloux S."/>
            <person name="Lelaure V."/>
            <person name="Mottier S."/>
            <person name="Galibert F."/>
            <person name="Aves S.J."/>
            <person name="Xiang Z."/>
            <person name="Hunt C."/>
            <person name="Moore K."/>
            <person name="Hurst S.M."/>
            <person name="Lucas M."/>
            <person name="Rochet M."/>
            <person name="Gaillardin C."/>
            <person name="Tallada V.A."/>
            <person name="Garzon A."/>
            <person name="Thode G."/>
            <person name="Daga R.R."/>
            <person name="Cruzado L."/>
            <person name="Jimenez J."/>
            <person name="Sanchez M."/>
            <person name="del Rey F."/>
            <person name="Benito J."/>
            <person name="Dominguez A."/>
            <person name="Revuelta J.L."/>
            <person name="Moreno S."/>
            <person name="Armstrong J."/>
            <person name="Forsburg S.L."/>
            <person name="Cerutti L."/>
            <person name="Lowe T."/>
            <person name="McCombie W.R."/>
            <person name="Paulsen I."/>
            <person name="Potashkin J."/>
            <person name="Shpakovski G.V."/>
            <person name="Ussery D."/>
            <person name="Barrell B.G."/>
            <person name="Nurse P."/>
        </authorList>
    </citation>
    <scope>NUCLEOTIDE SEQUENCE [LARGE SCALE GENOMIC DNA]</scope>
    <source>
        <strain>972 / ATCC 24843</strain>
    </source>
</reference>
<reference key="2">
    <citation type="journal article" date="2011" name="Science">
        <title>Comparative functional genomics of the fission yeasts.</title>
        <authorList>
            <person name="Rhind N."/>
            <person name="Chen Z."/>
            <person name="Yassour M."/>
            <person name="Thompson D.A."/>
            <person name="Haas B.J."/>
            <person name="Habib N."/>
            <person name="Wapinski I."/>
            <person name="Roy S."/>
            <person name="Lin M.F."/>
            <person name="Heiman D.I."/>
            <person name="Young S.K."/>
            <person name="Furuya K."/>
            <person name="Guo Y."/>
            <person name="Pidoux A."/>
            <person name="Chen H.M."/>
            <person name="Robbertse B."/>
            <person name="Goldberg J.M."/>
            <person name="Aoki K."/>
            <person name="Bayne E.H."/>
            <person name="Berlin A.M."/>
            <person name="Desjardins C.A."/>
            <person name="Dobbs E."/>
            <person name="Dukaj L."/>
            <person name="Fan L."/>
            <person name="FitzGerald M.G."/>
            <person name="French C."/>
            <person name="Gujja S."/>
            <person name="Hansen K."/>
            <person name="Keifenheim D."/>
            <person name="Levin J.Z."/>
            <person name="Mosher R.A."/>
            <person name="Mueller C.A."/>
            <person name="Pfiffner J."/>
            <person name="Priest M."/>
            <person name="Russ C."/>
            <person name="Smialowska A."/>
            <person name="Swoboda P."/>
            <person name="Sykes S.M."/>
            <person name="Vaughn M."/>
            <person name="Vengrova S."/>
            <person name="Yoder R."/>
            <person name="Zeng Q."/>
            <person name="Allshire R."/>
            <person name="Baulcombe D."/>
            <person name="Birren B.W."/>
            <person name="Brown W."/>
            <person name="Ekwall K."/>
            <person name="Kellis M."/>
            <person name="Leatherwood J."/>
            <person name="Levin H."/>
            <person name="Margalit H."/>
            <person name="Martienssen R."/>
            <person name="Nieduszynski C.A."/>
            <person name="Spatafora J.W."/>
            <person name="Friedman N."/>
            <person name="Dalgaard J.Z."/>
            <person name="Baumann P."/>
            <person name="Niki H."/>
            <person name="Regev A."/>
            <person name="Nusbaum C."/>
        </authorList>
    </citation>
    <scope>REVISION OF GENE MODEL</scope>
</reference>
<reference key="3">
    <citation type="journal article" date="2003" name="Genome Res.">
        <title>Retrotransposons and their recognition of pol II promoters: a comprehensive survey of the transposable elements from the complete genome sequence of Schizosaccharomyces pombe.</title>
        <authorList>
            <person name="Bowen N.J."/>
            <person name="Jordan I.K."/>
            <person name="Epstein J.A."/>
            <person name="Wood V."/>
            <person name="Levin H.L."/>
        </authorList>
    </citation>
    <scope>IDENTIFICATION</scope>
</reference>
<reference key="4">
    <citation type="journal article" date="2006" name="Nat. Biotechnol.">
        <title>ORFeome cloning and global analysis of protein localization in the fission yeast Schizosaccharomyces pombe.</title>
        <authorList>
            <person name="Matsuyama A."/>
            <person name="Arai R."/>
            <person name="Yashiroda Y."/>
            <person name="Shirai A."/>
            <person name="Kamata A."/>
            <person name="Sekido S."/>
            <person name="Kobayashi Y."/>
            <person name="Hashimoto A."/>
            <person name="Hamamoto M."/>
            <person name="Hiraoka Y."/>
            <person name="Horinouchi S."/>
            <person name="Yoshida M."/>
        </authorList>
    </citation>
    <scope>SUBCELLULAR LOCATION [LARGE SCALE ANALYSIS]</scope>
</reference>
<reference key="5">
    <citation type="journal article" date="2019" name="Mol. Biol. Evol.">
        <title>Killer meiotic drive and dynamic evolution of the wtf gene family.</title>
        <authorList>
            <person name="Eickbush M.T."/>
            <person name="Young J.M."/>
            <person name="Zanders S.E."/>
        </authorList>
    </citation>
    <scope>LACK OF ALTERNATIVE SPLICING</scope>
</reference>
<reference key="6">
    <citation type="journal article" date="2020" name="PLoS Genet.">
        <title>Dramatically diverse Schizosaccharomyces pombe wtf meiotic drivers all display high gamete-killing efficiency.</title>
        <authorList>
            <person name="Bravo Nunez M.A."/>
            <person name="Sabbarini I.M."/>
            <person name="Eickbush M.T."/>
            <person name="Liang Y."/>
            <person name="Lange J.J."/>
            <person name="Kent A.M."/>
            <person name="Zanders S.E."/>
        </authorList>
    </citation>
    <scope>DEVELOPMENTAL STAGE</scope>
    <scope>DISRUPTION PHENOTYPE</scope>
</reference>
<gene>
    <name evidence="9" type="primary">wtf14</name>
    <name type="synonym">wtf15</name>
    <name evidence="9" type="ORF">SPCC663.02</name>
</gene>